<feature type="chain" id="PRO_0000212741" description="Protein RECOGNITION OF PERONOSPORA PARASITICA 7">
    <location>
        <begin position="1"/>
        <end position="1138"/>
    </location>
</feature>
<feature type="domain" description="NB-ARC" evidence="2">
    <location>
        <begin position="166"/>
        <end position="422"/>
    </location>
</feature>
<feature type="repeat" description="LRR 1" evidence="2">
    <location>
        <begin position="544"/>
        <end position="565"/>
    </location>
</feature>
<feature type="repeat" description="LRR 2" evidence="2">
    <location>
        <begin position="566"/>
        <end position="581"/>
    </location>
</feature>
<feature type="repeat" description="LRR 3" evidence="2">
    <location>
        <begin position="582"/>
        <end position="606"/>
    </location>
</feature>
<feature type="repeat" description="LRR 4" evidence="2">
    <location>
        <begin position="607"/>
        <end position="631"/>
    </location>
</feature>
<feature type="repeat" description="LRR 5" evidence="2">
    <location>
        <begin position="655"/>
        <end position="680"/>
    </location>
</feature>
<feature type="repeat" description="LRR 6" evidence="2">
    <location>
        <begin position="681"/>
        <end position="705"/>
    </location>
</feature>
<feature type="repeat" description="LRR 7" evidence="2">
    <location>
        <begin position="707"/>
        <end position="726"/>
    </location>
</feature>
<feature type="repeat" description="LRR 8" evidence="2">
    <location>
        <begin position="727"/>
        <end position="752"/>
    </location>
</feature>
<feature type="repeat" description="LRR 9" evidence="2">
    <location>
        <begin position="754"/>
        <end position="774"/>
    </location>
</feature>
<feature type="repeat" description="LRR 10" evidence="2">
    <location>
        <begin position="775"/>
        <end position="797"/>
    </location>
</feature>
<feature type="repeat" description="LRR 11" evidence="2">
    <location>
        <begin position="798"/>
        <end position="825"/>
    </location>
</feature>
<feature type="repeat" description="LRR 12" evidence="2">
    <location>
        <begin position="847"/>
        <end position="871"/>
    </location>
</feature>
<feature type="repeat" description="LRR 13" evidence="2">
    <location>
        <begin position="873"/>
        <end position="893"/>
    </location>
</feature>
<feature type="repeat" description="LRR 14" evidence="2">
    <location>
        <begin position="894"/>
        <end position="918"/>
    </location>
</feature>
<feature type="repeat" description="LRR 15" evidence="2">
    <location>
        <begin position="940"/>
        <end position="963"/>
    </location>
</feature>
<feature type="repeat" description="LRR 16" evidence="2">
    <location>
        <begin position="1028"/>
        <end position="1050"/>
    </location>
</feature>
<feature type="repeat" description="LRR 17" evidence="2">
    <location>
        <begin position="1055"/>
        <end position="1078"/>
    </location>
</feature>
<feature type="repeat" description="LRR 18" evidence="2">
    <location>
        <begin position="1079"/>
        <end position="1103"/>
    </location>
</feature>
<feature type="repeat" description="LRR 19" evidence="2">
    <location>
        <begin position="1115"/>
        <end position="1138"/>
    </location>
</feature>
<feature type="binding site" evidence="3">
    <location>
        <begin position="189"/>
        <end position="196"/>
    </location>
    <ligand>
        <name>ATP</name>
        <dbReference type="ChEBI" id="CHEBI:30616"/>
    </ligand>
</feature>
<evidence type="ECO:0000250" key="1"/>
<evidence type="ECO:0000255" key="2"/>
<evidence type="ECO:0000255" key="3">
    <source>
        <dbReference type="PROSITE-ProRule" id="PRU00499"/>
    </source>
</evidence>
<evidence type="ECO:0000269" key="4">
    <source>
    </source>
</evidence>
<evidence type="ECO:0000269" key="5">
    <source>
    </source>
</evidence>
<evidence type="ECO:0000303" key="6">
    <source>
    </source>
</evidence>
<evidence type="ECO:0000305" key="7"/>
<evidence type="ECO:0000312" key="8">
    <source>
        <dbReference type="Araport" id="AT1G58602"/>
    </source>
</evidence>
<evidence type="ECO:0000312" key="9">
    <source>
        <dbReference type="EMBL" id="BAB84011.1"/>
    </source>
</evidence>
<comment type="function">
    <text evidence="5">Disease resistance protein required for incompatible interactions with avirulent strains of Hyaloperonospora arabidopsidis (downy mildew), isolate Hpa-Hiks1 in cv. Columbia.</text>
</comment>
<comment type="induction">
    <text evidence="4">In cv. Columbia, regulated epigenetically by EDM2 (e.g. alternative polyadenylation (APA) resulting from cooption of epigenetic information at the TE insertion locus COPIA-R7) to accumulate upon Hyaloperonospora arabidopsidis isolate Hiks1 infection.</text>
</comment>
<comment type="domain">
    <text evidence="1">The LRR repeats probably act as specificity determinant of pathogen recognition.</text>
</comment>
<comment type="disruption phenotype">
    <text evidence="5">Compromised RPP7-dependent immunity leading to an increased sporulation of the incompatible Hyaloperonospora arabidopsidis (downy mildew) Hpa-Hiks1 isolate, but normal resistance to Hpa-Cala2 and Hpa-Cand5 isolates in cv. Col-5 background; full susceptibility to these isolates is observed in cv. Wassilewskija background.</text>
</comment>
<comment type="similarity">
    <text evidence="7">Belongs to the disease resistance NB-LRR family.</text>
</comment>
<comment type="online information" name="NIB-LRRS">
    <link uri="http://niblrrs.ucdavis.edu"/>
    <text>Functional and comparative genomics of disease resistance gene homologs</text>
</comment>
<dbReference type="EMBL" id="AB078516">
    <property type="protein sequence ID" value="BAB84011.1"/>
    <property type="molecule type" value="Genomic_DNA"/>
</dbReference>
<dbReference type="EMBL" id="CP002684">
    <property type="protein sequence ID" value="AEE33556.1"/>
    <property type="molecule type" value="Genomic_DNA"/>
</dbReference>
<dbReference type="EMBL" id="CP002684">
    <property type="protein sequence ID" value="AEE33557.1"/>
    <property type="molecule type" value="Genomic_DNA"/>
</dbReference>
<dbReference type="EMBL" id="AY049262">
    <property type="protein sequence ID" value="AAK83604.1"/>
    <property type="molecule type" value="mRNA"/>
</dbReference>
<dbReference type="RefSeq" id="NP_001077742.1">
    <property type="nucleotide sequence ID" value="NM_001084273.3"/>
</dbReference>
<dbReference type="RefSeq" id="NP_683441.1">
    <property type="nucleotide sequence ID" value="NM_148600.3"/>
</dbReference>
<dbReference type="SMR" id="Q8W3K0"/>
<dbReference type="BioGRID" id="27445">
    <property type="interactions" value="1"/>
</dbReference>
<dbReference type="FunCoup" id="Q8W3K0">
    <property type="interactions" value="98"/>
</dbReference>
<dbReference type="STRING" id="3702.Q8W3K0"/>
<dbReference type="PaxDb" id="3702-AT1G58602.2"/>
<dbReference type="ProteomicsDB" id="224350"/>
<dbReference type="EnsemblPlants" id="AT1G58602.1">
    <property type="protein sequence ID" value="AT1G58602.1"/>
    <property type="gene ID" value="AT1G58602"/>
</dbReference>
<dbReference type="EnsemblPlants" id="AT1G58602.2">
    <property type="protein sequence ID" value="AT1G58602.2"/>
    <property type="gene ID" value="AT1G58602"/>
</dbReference>
<dbReference type="GeneID" id="842220"/>
<dbReference type="Gramene" id="AT1G58602.1">
    <property type="protein sequence ID" value="AT1G58602.1"/>
    <property type="gene ID" value="AT1G58602"/>
</dbReference>
<dbReference type="Gramene" id="AT1G58602.2">
    <property type="protein sequence ID" value="AT1G58602.2"/>
    <property type="gene ID" value="AT1G58602"/>
</dbReference>
<dbReference type="KEGG" id="ath:AT1G58602"/>
<dbReference type="Araport" id="AT1G58602"/>
<dbReference type="TAIR" id="AT1G58602">
    <property type="gene designation" value="RPP7"/>
</dbReference>
<dbReference type="eggNOG" id="KOG4658">
    <property type="taxonomic scope" value="Eukaryota"/>
</dbReference>
<dbReference type="HOGENOM" id="CLU_000837_35_5_1"/>
<dbReference type="InParanoid" id="Q8W3K0"/>
<dbReference type="OMA" id="MENQDSQ"/>
<dbReference type="PhylomeDB" id="Q8W3K0"/>
<dbReference type="PRO" id="PR:Q8W3K0"/>
<dbReference type="Proteomes" id="UP000006548">
    <property type="component" value="Chromosome 1"/>
</dbReference>
<dbReference type="ExpressionAtlas" id="Q8W3K0">
    <property type="expression patterns" value="baseline and differential"/>
</dbReference>
<dbReference type="GO" id="GO:0043531">
    <property type="term" value="F:ADP binding"/>
    <property type="evidence" value="ECO:0007669"/>
    <property type="project" value="InterPro"/>
</dbReference>
<dbReference type="GO" id="GO:0005524">
    <property type="term" value="F:ATP binding"/>
    <property type="evidence" value="ECO:0007669"/>
    <property type="project" value="UniProtKB-KW"/>
</dbReference>
<dbReference type="GO" id="GO:0002229">
    <property type="term" value="P:defense response to oomycetes"/>
    <property type="evidence" value="ECO:0000315"/>
    <property type="project" value="UniProtKB"/>
</dbReference>
<dbReference type="CDD" id="cd14798">
    <property type="entry name" value="RX-CC_like"/>
    <property type="match status" value="1"/>
</dbReference>
<dbReference type="FunFam" id="3.40.50.300:FF:001091">
    <property type="entry name" value="Probable disease resistance protein At1g61300"/>
    <property type="match status" value="1"/>
</dbReference>
<dbReference type="FunFam" id="1.10.10.10:FF:000322">
    <property type="entry name" value="Probable disease resistance protein At1g63360"/>
    <property type="match status" value="1"/>
</dbReference>
<dbReference type="FunFam" id="1.10.8.430:FF:000003">
    <property type="entry name" value="Probable disease resistance protein At5g66910"/>
    <property type="match status" value="1"/>
</dbReference>
<dbReference type="Gene3D" id="1.20.5.4130">
    <property type="match status" value="1"/>
</dbReference>
<dbReference type="Gene3D" id="1.10.8.430">
    <property type="entry name" value="Helical domain of apoptotic protease-activating factors"/>
    <property type="match status" value="1"/>
</dbReference>
<dbReference type="Gene3D" id="3.40.50.300">
    <property type="entry name" value="P-loop containing nucleotide triphosphate hydrolases"/>
    <property type="match status" value="1"/>
</dbReference>
<dbReference type="Gene3D" id="3.80.10.10">
    <property type="entry name" value="Ribonuclease Inhibitor"/>
    <property type="match status" value="3"/>
</dbReference>
<dbReference type="Gene3D" id="1.10.10.10">
    <property type="entry name" value="Winged helix-like DNA-binding domain superfamily/Winged helix DNA-binding domain"/>
    <property type="match status" value="1"/>
</dbReference>
<dbReference type="InterPro" id="IPR042197">
    <property type="entry name" value="Apaf_helical"/>
</dbReference>
<dbReference type="InterPro" id="IPR032675">
    <property type="entry name" value="LRR_dom_sf"/>
</dbReference>
<dbReference type="InterPro" id="IPR055414">
    <property type="entry name" value="LRR_R13L4/SHOC2-like"/>
</dbReference>
<dbReference type="InterPro" id="IPR002182">
    <property type="entry name" value="NB-ARC"/>
</dbReference>
<dbReference type="InterPro" id="IPR027417">
    <property type="entry name" value="P-loop_NTPase"/>
</dbReference>
<dbReference type="InterPro" id="IPR038005">
    <property type="entry name" value="RX-like_CC"/>
</dbReference>
<dbReference type="InterPro" id="IPR041118">
    <property type="entry name" value="Rx_N"/>
</dbReference>
<dbReference type="InterPro" id="IPR036388">
    <property type="entry name" value="WH-like_DNA-bd_sf"/>
</dbReference>
<dbReference type="PANTHER" id="PTHR36766:SF40">
    <property type="entry name" value="DISEASE RESISTANCE PROTEIN RGA3"/>
    <property type="match status" value="1"/>
</dbReference>
<dbReference type="PANTHER" id="PTHR36766">
    <property type="entry name" value="PLANT BROAD-SPECTRUM MILDEW RESISTANCE PROTEIN RPW8"/>
    <property type="match status" value="1"/>
</dbReference>
<dbReference type="Pfam" id="PF23598">
    <property type="entry name" value="LRR_14"/>
    <property type="match status" value="1"/>
</dbReference>
<dbReference type="Pfam" id="PF00931">
    <property type="entry name" value="NB-ARC"/>
    <property type="match status" value="1"/>
</dbReference>
<dbReference type="Pfam" id="PF18052">
    <property type="entry name" value="Rx_N"/>
    <property type="match status" value="1"/>
</dbReference>
<dbReference type="Pfam" id="PF23559">
    <property type="entry name" value="WH_DRP"/>
    <property type="match status" value="1"/>
</dbReference>
<dbReference type="PRINTS" id="PR00364">
    <property type="entry name" value="DISEASERSIST"/>
</dbReference>
<dbReference type="SUPFAM" id="SSF52058">
    <property type="entry name" value="L domain-like"/>
    <property type="match status" value="1"/>
</dbReference>
<dbReference type="SUPFAM" id="SSF52540">
    <property type="entry name" value="P-loop containing nucleoside triphosphate hydrolases"/>
    <property type="match status" value="1"/>
</dbReference>
<dbReference type="SUPFAM" id="SSF52047">
    <property type="entry name" value="RNI-like"/>
    <property type="match status" value="1"/>
</dbReference>
<gene>
    <name evidence="6" type="primary">RPP7</name>
    <name evidence="8" type="ordered locus">At1g58602</name>
    <name evidence="9" type="ORF">R18I.4</name>
</gene>
<proteinExistence type="evidence at transcript level"/>
<sequence>MAGELVSFAVNKLWDLLSHEYTLFQGVEDQVAELKSDLNLLKSFLKDADAKKHTSALVRYCVEEIKDIVYDAEDVLETFVQKEKLGTTSGIRKHIKRLTCIVPDRREIALYIGHVSKRITRVIRDMQSFGVQQMIVDDYMHPLRNREREIRRTFPKDNESGFVALEENVKKLVGYFVEEDNYQVVSITGMGGLGKTTLARQVFNHDMVTKKFDKLAWVSVSQDFTLKNVWQNILGDLKPKEEETKEEEKKILEMTEYTLQRELYQLLEMSKSLIVLDDIWKKEDWEVIKPIFPPTKGWKLLLTSRNESIVAPTNTKYFNFKPECLKTDDSWKLFQRIAFPINDASEFEIDEEMEKLGEKMIEHCGGLPLAIKVLGGMLAEKYTSHDWRRLSENIGSHLVGGRTNFNDDNNNSCNYVLSLSFEELPSYLKHCFLYLAHFPEDYEIKVENLSYYWAAEEIFQPRHYDGEIIRDVGDVYIEELVRRNMVISERDVKTSRFETCHLHDMMREVCLLKAKEENFLQITSNPPSTANFQSTVTSRRLVYQYPTTLHVEKDINNPKLRSLVVVTLGSWNMAGSSFTRLELLRVLDLVQAKLKGGKLASCIGKLIHLRYLSLEYAEVTHIPYSLGNLKLLIYLNLHISLSSRSNFVPNVLMGMQELRYLALPSLIERKTKLELSNLVKLETLENFSTKNSSLEDLRGMVRLRTLTIELIEETSLETLAASIGGLKYLEKLEIDDLGSKMRTKEAGIVFDFVHLKRLRLELYMPRLSKEQHFPSHLTTLYLQHCRLEEDPMPILEKLLQLKELELGHKSFSGKKMVCSSCGFPQLQKLSISGLKEWEDWKVEESSMPLLLTLNIFDCRKLKQLPDEHLPSHLTAISLKKCGLEDPIPTLERLVHLKELSLSELCGRIMVCTGGGFPQLHKLDLSELDGLEEWIVEDGSMPRLHTLEIRRCLKLKKLPNGFPQLQNLHLTEVEEWEEGMIVKQGSMPLLHTLYIWHCPKLPGEQHFPSHLTTVFLLGMYVEEDPMRILEKLLHLKNVSLFQSFSGKRMVCSGGGFPQLQKLSIREIEWEEWIVEQGSMPLLHTLYIGVCPNLKELPDGLRFIYSLKNLIVSKRWKKRLSEGGEDYYKVQHIPSVEFDD</sequence>
<keyword id="KW-0067">ATP-binding</keyword>
<keyword id="KW-0433">Leucine-rich repeat</keyword>
<keyword id="KW-0547">Nucleotide-binding</keyword>
<keyword id="KW-0611">Plant defense</keyword>
<keyword id="KW-1185">Reference proteome</keyword>
<keyword id="KW-0677">Repeat</keyword>
<accession>Q8W3K0</accession>
<accession>Q94A96</accession>
<organism>
    <name type="scientific">Arabidopsis thaliana</name>
    <name type="common">Mouse-ear cress</name>
    <dbReference type="NCBI Taxonomy" id="3702"/>
    <lineage>
        <taxon>Eukaryota</taxon>
        <taxon>Viridiplantae</taxon>
        <taxon>Streptophyta</taxon>
        <taxon>Embryophyta</taxon>
        <taxon>Tracheophyta</taxon>
        <taxon>Spermatophyta</taxon>
        <taxon>Magnoliopsida</taxon>
        <taxon>eudicotyledons</taxon>
        <taxon>Gunneridae</taxon>
        <taxon>Pentapetalae</taxon>
        <taxon>rosids</taxon>
        <taxon>malvids</taxon>
        <taxon>Brassicales</taxon>
        <taxon>Brassicaceae</taxon>
        <taxon>Camelineae</taxon>
        <taxon>Arabidopsis</taxon>
    </lineage>
</organism>
<name>RPP7_ARATH</name>
<protein>
    <recommendedName>
        <fullName evidence="6">Protein RECOGNITION OF PERONOSPORA PARASITICA 7</fullName>
    </recommendedName>
</protein>
<reference key="1">
    <citation type="journal article" date="2000" name="Nature">
        <title>Sequence and analysis of chromosome 1 of the plant Arabidopsis thaliana.</title>
        <authorList>
            <person name="Theologis A."/>
            <person name="Ecker J.R."/>
            <person name="Palm C.J."/>
            <person name="Federspiel N.A."/>
            <person name="Kaul S."/>
            <person name="White O."/>
            <person name="Alonso J."/>
            <person name="Altafi H."/>
            <person name="Araujo R."/>
            <person name="Bowman C.L."/>
            <person name="Brooks S.Y."/>
            <person name="Buehler E."/>
            <person name="Chan A."/>
            <person name="Chao Q."/>
            <person name="Chen H."/>
            <person name="Cheuk R.F."/>
            <person name="Chin C.W."/>
            <person name="Chung M.K."/>
            <person name="Conn L."/>
            <person name="Conway A.B."/>
            <person name="Conway A.R."/>
            <person name="Creasy T.H."/>
            <person name="Dewar K."/>
            <person name="Dunn P."/>
            <person name="Etgu P."/>
            <person name="Feldblyum T.V."/>
            <person name="Feng J.-D."/>
            <person name="Fong B."/>
            <person name="Fujii C.Y."/>
            <person name="Gill J.E."/>
            <person name="Goldsmith A.D."/>
            <person name="Haas B."/>
            <person name="Hansen N.F."/>
            <person name="Hughes B."/>
            <person name="Huizar L."/>
            <person name="Hunter J.L."/>
            <person name="Jenkins J."/>
            <person name="Johnson-Hopson C."/>
            <person name="Khan S."/>
            <person name="Khaykin E."/>
            <person name="Kim C.J."/>
            <person name="Koo H.L."/>
            <person name="Kremenetskaia I."/>
            <person name="Kurtz D.B."/>
            <person name="Kwan A."/>
            <person name="Lam B."/>
            <person name="Langin-Hooper S."/>
            <person name="Lee A."/>
            <person name="Lee J.M."/>
            <person name="Lenz C.A."/>
            <person name="Li J.H."/>
            <person name="Li Y.-P."/>
            <person name="Lin X."/>
            <person name="Liu S.X."/>
            <person name="Liu Z.A."/>
            <person name="Luros J.S."/>
            <person name="Maiti R."/>
            <person name="Marziali A."/>
            <person name="Militscher J."/>
            <person name="Miranda M."/>
            <person name="Nguyen M."/>
            <person name="Nierman W.C."/>
            <person name="Osborne B.I."/>
            <person name="Pai G."/>
            <person name="Peterson J."/>
            <person name="Pham P.K."/>
            <person name="Rizzo M."/>
            <person name="Rooney T."/>
            <person name="Rowley D."/>
            <person name="Sakano H."/>
            <person name="Salzberg S.L."/>
            <person name="Schwartz J.R."/>
            <person name="Shinn P."/>
            <person name="Southwick A.M."/>
            <person name="Sun H."/>
            <person name="Tallon L.J."/>
            <person name="Tambunga G."/>
            <person name="Toriumi M.J."/>
            <person name="Town C.D."/>
            <person name="Utterback T."/>
            <person name="Van Aken S."/>
            <person name="Vaysberg M."/>
            <person name="Vysotskaia V.S."/>
            <person name="Walker M."/>
            <person name="Wu D."/>
            <person name="Yu G."/>
            <person name="Fraser C.M."/>
            <person name="Venter J.C."/>
            <person name="Davis R.W."/>
        </authorList>
    </citation>
    <scope>NUCLEOTIDE SEQUENCE [LARGE SCALE GENOMIC DNA]</scope>
    <source>
        <strain>cv. Columbia</strain>
    </source>
</reference>
<reference key="2">
    <citation type="journal article" date="2017" name="Plant J.">
        <title>Araport11: a complete reannotation of the Arabidopsis thaliana reference genome.</title>
        <authorList>
            <person name="Cheng C.Y."/>
            <person name="Krishnakumar V."/>
            <person name="Chan A.P."/>
            <person name="Thibaud-Nissen F."/>
            <person name="Schobel S."/>
            <person name="Town C.D."/>
        </authorList>
    </citation>
    <scope>GENOME REANNOTATION</scope>
    <source>
        <strain>cv. Columbia</strain>
    </source>
</reference>
<reference key="3">
    <citation type="submission" date="2002-01" db="EMBL/GenBank/DDBJ databases">
        <title>Long repeat sequence within a genomic region located around the 100 map unit of chromosome 1 in Arabidopsis thaliana.</title>
        <authorList>
            <person name="Kato A."/>
            <person name="Komeda Y."/>
        </authorList>
    </citation>
    <scope>NUCLEOTIDE SEQUENCE</scope>
    <source>
        <strain>cv. Columbia</strain>
    </source>
</reference>
<reference key="4">
    <citation type="journal article" date="2003" name="Science">
        <title>Empirical analysis of transcriptional activity in the Arabidopsis genome.</title>
        <authorList>
            <person name="Yamada K."/>
            <person name="Lim J."/>
            <person name="Dale J.M."/>
            <person name="Chen H."/>
            <person name="Shinn P."/>
            <person name="Palm C.J."/>
            <person name="Southwick A.M."/>
            <person name="Wu H.C."/>
            <person name="Kim C.J."/>
            <person name="Nguyen M."/>
            <person name="Pham P.K."/>
            <person name="Cheuk R.F."/>
            <person name="Karlin-Newmann G."/>
            <person name="Liu S.X."/>
            <person name="Lam B."/>
            <person name="Sakano H."/>
            <person name="Wu T."/>
            <person name="Yu G."/>
            <person name="Miranda M."/>
            <person name="Quach H.L."/>
            <person name="Tripp M."/>
            <person name="Chang C.H."/>
            <person name="Lee J.M."/>
            <person name="Toriumi M.J."/>
            <person name="Chan M.M."/>
            <person name="Tang C.C."/>
            <person name="Onodera C.S."/>
            <person name="Deng J.M."/>
            <person name="Akiyama K."/>
            <person name="Ansari Y."/>
            <person name="Arakawa T."/>
            <person name="Banh J."/>
            <person name="Banno F."/>
            <person name="Bowser L."/>
            <person name="Brooks S.Y."/>
            <person name="Carninci P."/>
            <person name="Chao Q."/>
            <person name="Choy N."/>
            <person name="Enju A."/>
            <person name="Goldsmith A.D."/>
            <person name="Gurjal M."/>
            <person name="Hansen N.F."/>
            <person name="Hayashizaki Y."/>
            <person name="Johnson-Hopson C."/>
            <person name="Hsuan V.W."/>
            <person name="Iida K."/>
            <person name="Karnes M."/>
            <person name="Khan S."/>
            <person name="Koesema E."/>
            <person name="Ishida J."/>
            <person name="Jiang P.X."/>
            <person name="Jones T."/>
            <person name="Kawai J."/>
            <person name="Kamiya A."/>
            <person name="Meyers C."/>
            <person name="Nakajima M."/>
            <person name="Narusaka M."/>
            <person name="Seki M."/>
            <person name="Sakurai T."/>
            <person name="Satou M."/>
            <person name="Tamse R."/>
            <person name="Vaysberg M."/>
            <person name="Wallender E.K."/>
            <person name="Wong C."/>
            <person name="Yamamura Y."/>
            <person name="Yuan S."/>
            <person name="Shinozaki K."/>
            <person name="Davis R.W."/>
            <person name="Theologis A."/>
            <person name="Ecker J.R."/>
        </authorList>
    </citation>
    <scope>NUCLEOTIDE SEQUENCE [LARGE SCALE MRNA] OF 1-244</scope>
    <source>
        <strain>cv. Columbia</strain>
    </source>
</reference>
<reference key="5">
    <citation type="journal article" date="2013" name="Proc. Natl. Acad. Sci. U.S.A.">
        <title>An alternative polyadenylation mechanism coopted to the Arabidopsis RPP7 gene through intronic retrotransposon domestication.</title>
        <authorList>
            <person name="Tsuchiya T."/>
            <person name="Eulgem T."/>
        </authorList>
    </citation>
    <scope>INDUCTION</scope>
    <source>
        <strain>cv. Columbia</strain>
        <strain>cv. Koch-1</strain>
    </source>
</reference>
<reference key="6">
    <citation type="journal article" date="2019" name="Plant J.">
        <title>The Arabidopsis RRM domain protein EDM3 mediates race-specific disease resistance by controlling H3K9me2-dependent alternative polyadenylation of RPP7 immune receptor transcripts.</title>
        <authorList>
            <person name="Lai Y."/>
            <person name="Cuzick A."/>
            <person name="Lu X.M."/>
            <person name="Wang J."/>
            <person name="Katiyar N."/>
            <person name="Tsuchiya T."/>
            <person name="Le Roch K."/>
            <person name="McDowell J.M."/>
            <person name="Holub E."/>
            <person name="Eulgem T."/>
        </authorList>
    </citation>
    <scope>FUNCTION</scope>
    <scope>DISRUPTION PHENOTYPE</scope>
    <source>
        <strain>cv. Col-5</strain>
        <strain>cv. Wassilewskija</strain>
    </source>
</reference>